<sequence>MGSLSPWHWVVLVVVVVLLFGAKKLPDAARSLGKSMRIFKSELREMQTENQAQASALETPMQNPTVVQSQRVVPPWSTEQDHTEARPA</sequence>
<reference key="1">
    <citation type="submission" date="1994-03" db="EMBL/GenBank/DDBJ databases">
        <authorList>
            <person name="Smith D.R."/>
            <person name="Robison K."/>
        </authorList>
    </citation>
    <scope>NUCLEOTIDE SEQUENCE [GENOMIC DNA]</scope>
</reference>
<reference key="2">
    <citation type="journal article" date="2001" name="Nature">
        <title>Massive gene decay in the leprosy bacillus.</title>
        <authorList>
            <person name="Cole S.T."/>
            <person name="Eiglmeier K."/>
            <person name="Parkhill J."/>
            <person name="James K.D."/>
            <person name="Thomson N.R."/>
            <person name="Wheeler P.R."/>
            <person name="Honore N."/>
            <person name="Garnier T."/>
            <person name="Churcher C.M."/>
            <person name="Harris D.E."/>
            <person name="Mungall K.L."/>
            <person name="Basham D."/>
            <person name="Brown D."/>
            <person name="Chillingworth T."/>
            <person name="Connor R."/>
            <person name="Davies R.M."/>
            <person name="Devlin K."/>
            <person name="Duthoy S."/>
            <person name="Feltwell T."/>
            <person name="Fraser A."/>
            <person name="Hamlin N."/>
            <person name="Holroyd S."/>
            <person name="Hornsby T."/>
            <person name="Jagels K."/>
            <person name="Lacroix C."/>
            <person name="Maclean J."/>
            <person name="Moule S."/>
            <person name="Murphy L.D."/>
            <person name="Oliver K."/>
            <person name="Quail M.A."/>
            <person name="Rajandream M.A."/>
            <person name="Rutherford K.M."/>
            <person name="Rutter S."/>
            <person name="Seeger K."/>
            <person name="Simon S."/>
            <person name="Simmonds M."/>
            <person name="Skelton J."/>
            <person name="Squares R."/>
            <person name="Squares S."/>
            <person name="Stevens K."/>
            <person name="Taylor K."/>
            <person name="Whitehead S."/>
            <person name="Woodward J.R."/>
            <person name="Barrell B.G."/>
        </authorList>
    </citation>
    <scope>NUCLEOTIDE SEQUENCE [LARGE SCALE GENOMIC DNA]</scope>
    <source>
        <strain>TN</strain>
    </source>
</reference>
<organism>
    <name type="scientific">Mycobacterium leprae (strain TN)</name>
    <dbReference type="NCBI Taxonomy" id="272631"/>
    <lineage>
        <taxon>Bacteria</taxon>
        <taxon>Bacillati</taxon>
        <taxon>Actinomycetota</taxon>
        <taxon>Actinomycetes</taxon>
        <taxon>Mycobacteriales</taxon>
        <taxon>Mycobacteriaceae</taxon>
        <taxon>Mycobacterium</taxon>
    </lineage>
</organism>
<proteinExistence type="inferred from homology"/>
<keyword id="KW-1003">Cell membrane</keyword>
<keyword id="KW-0472">Membrane</keyword>
<keyword id="KW-0653">Protein transport</keyword>
<keyword id="KW-1185">Reference proteome</keyword>
<keyword id="KW-0811">Translocation</keyword>
<keyword id="KW-0812">Transmembrane</keyword>
<keyword id="KW-1133">Transmembrane helix</keyword>
<keyword id="KW-0813">Transport</keyword>
<accession>P54079</accession>
<evidence type="ECO:0000255" key="1">
    <source>
        <dbReference type="HAMAP-Rule" id="MF_00236"/>
    </source>
</evidence>
<evidence type="ECO:0000256" key="2">
    <source>
        <dbReference type="SAM" id="MobiDB-lite"/>
    </source>
</evidence>
<evidence type="ECO:0000305" key="3"/>
<gene>
    <name evidence="1" type="primary">tatA</name>
    <name type="ordered locus">ML1331</name>
    <name type="ORF">B2126_C1_182</name>
    <name type="ORF">MLCB2533.27</name>
    <name type="ORF">u2126b</name>
</gene>
<protein>
    <recommendedName>
        <fullName evidence="1">Sec-independent protein translocase protein TatA</fullName>
    </recommendedName>
</protein>
<name>TATA_MYCLE</name>
<feature type="chain" id="PRO_0000097944" description="Sec-independent protein translocase protein TatA">
    <location>
        <begin position="1"/>
        <end position="88"/>
    </location>
</feature>
<feature type="transmembrane region" description="Helical" evidence="1">
    <location>
        <begin position="1"/>
        <end position="21"/>
    </location>
</feature>
<feature type="region of interest" description="Disordered" evidence="2">
    <location>
        <begin position="49"/>
        <end position="88"/>
    </location>
</feature>
<feature type="compositionally biased region" description="Polar residues" evidence="2">
    <location>
        <begin position="49"/>
        <end position="71"/>
    </location>
</feature>
<feature type="compositionally biased region" description="Basic and acidic residues" evidence="2">
    <location>
        <begin position="79"/>
        <end position="88"/>
    </location>
</feature>
<dbReference type="EMBL" id="U00017">
    <property type="protein sequence ID" value="AAA17190.1"/>
    <property type="molecule type" value="Genomic_DNA"/>
</dbReference>
<dbReference type="EMBL" id="AL035310">
    <property type="protein sequence ID" value="CAA22941.1"/>
    <property type="molecule type" value="Genomic_DNA"/>
</dbReference>
<dbReference type="EMBL" id="AL583921">
    <property type="protein sequence ID" value="CAC31712.1"/>
    <property type="status" value="ALT_INIT"/>
    <property type="molecule type" value="Genomic_DNA"/>
</dbReference>
<dbReference type="PIR" id="E87075">
    <property type="entry name" value="E87075"/>
</dbReference>
<dbReference type="PIR" id="S72850">
    <property type="entry name" value="S72850"/>
</dbReference>
<dbReference type="RefSeq" id="NP_301955.2">
    <property type="nucleotide sequence ID" value="NC_002677.1"/>
</dbReference>
<dbReference type="RefSeq" id="WP_010908276.1">
    <property type="nucleotide sequence ID" value="NC_002677.1"/>
</dbReference>
<dbReference type="SMR" id="P54079"/>
<dbReference type="STRING" id="272631.gene:17575165"/>
<dbReference type="KEGG" id="mle:ML1331"/>
<dbReference type="PATRIC" id="fig|272631.5.peg.2451"/>
<dbReference type="Leproma" id="ML1331"/>
<dbReference type="eggNOG" id="COG1826">
    <property type="taxonomic scope" value="Bacteria"/>
</dbReference>
<dbReference type="HOGENOM" id="CLU_086034_4_2_11"/>
<dbReference type="OrthoDB" id="5245163at2"/>
<dbReference type="Proteomes" id="UP000000806">
    <property type="component" value="Chromosome"/>
</dbReference>
<dbReference type="GO" id="GO:0033281">
    <property type="term" value="C:TAT protein transport complex"/>
    <property type="evidence" value="ECO:0007669"/>
    <property type="project" value="UniProtKB-UniRule"/>
</dbReference>
<dbReference type="GO" id="GO:0008320">
    <property type="term" value="F:protein transmembrane transporter activity"/>
    <property type="evidence" value="ECO:0007669"/>
    <property type="project" value="UniProtKB-UniRule"/>
</dbReference>
<dbReference type="GO" id="GO:0043953">
    <property type="term" value="P:protein transport by the Tat complex"/>
    <property type="evidence" value="ECO:0007669"/>
    <property type="project" value="UniProtKB-UniRule"/>
</dbReference>
<dbReference type="Gene3D" id="1.20.5.3310">
    <property type="match status" value="1"/>
</dbReference>
<dbReference type="HAMAP" id="MF_00236">
    <property type="entry name" value="TatA_E"/>
    <property type="match status" value="1"/>
</dbReference>
<dbReference type="InterPro" id="IPR003369">
    <property type="entry name" value="TatA/B/E"/>
</dbReference>
<dbReference type="InterPro" id="IPR006312">
    <property type="entry name" value="TatA/E"/>
</dbReference>
<dbReference type="NCBIfam" id="NF001854">
    <property type="entry name" value="PRK00575.1"/>
    <property type="match status" value="1"/>
</dbReference>
<dbReference type="NCBIfam" id="TIGR01411">
    <property type="entry name" value="tatAE"/>
    <property type="match status" value="1"/>
</dbReference>
<dbReference type="PANTHER" id="PTHR42982">
    <property type="entry name" value="SEC-INDEPENDENT PROTEIN TRANSLOCASE PROTEIN TATA"/>
    <property type="match status" value="1"/>
</dbReference>
<dbReference type="PANTHER" id="PTHR42982:SF8">
    <property type="entry name" value="SEC-INDEPENDENT PROTEIN TRANSLOCASE PROTEIN TATA"/>
    <property type="match status" value="1"/>
</dbReference>
<dbReference type="Pfam" id="PF02416">
    <property type="entry name" value="TatA_B_E"/>
    <property type="match status" value="1"/>
</dbReference>
<comment type="function">
    <text evidence="1">Part of the twin-arginine translocation (Tat) system that transports large folded proteins containing a characteristic twin-arginine motif in their signal peptide across membranes. TatA could form the protein-conducting channel of the Tat system.</text>
</comment>
<comment type="subunit">
    <text evidence="1">The Tat system comprises two distinct complexes: a TatABC complex, containing multiple copies of TatA, TatB and TatC subunits, and a separate TatA complex, containing only TatA subunits. Substrates initially bind to the TatABC complex, which probably triggers association of the separate TatA complex to form the active translocon.</text>
</comment>
<comment type="subcellular location">
    <subcellularLocation>
        <location evidence="1">Cell membrane</location>
        <topology evidence="1">Single-pass membrane protein</topology>
    </subcellularLocation>
</comment>
<comment type="similarity">
    <text evidence="1">Belongs to the TatA/E family.</text>
</comment>
<comment type="sequence caution" evidence="3">
    <conflict type="erroneous initiation">
        <sequence resource="EMBL-CDS" id="CAC31712"/>
    </conflict>
</comment>